<reference key="1">
    <citation type="journal article" date="2001" name="Nature">
        <title>Complete genome sequence of Salmonella enterica serovar Typhimurium LT2.</title>
        <authorList>
            <person name="McClelland M."/>
            <person name="Sanderson K.E."/>
            <person name="Spieth J."/>
            <person name="Clifton S.W."/>
            <person name="Latreille P."/>
            <person name="Courtney L."/>
            <person name="Porwollik S."/>
            <person name="Ali J."/>
            <person name="Dante M."/>
            <person name="Du F."/>
            <person name="Hou S."/>
            <person name="Layman D."/>
            <person name="Leonard S."/>
            <person name="Nguyen C."/>
            <person name="Scott K."/>
            <person name="Holmes A."/>
            <person name="Grewal N."/>
            <person name="Mulvaney E."/>
            <person name="Ryan E."/>
            <person name="Sun H."/>
            <person name="Florea L."/>
            <person name="Miller W."/>
            <person name="Stoneking T."/>
            <person name="Nhan M."/>
            <person name="Waterston R."/>
            <person name="Wilson R.K."/>
        </authorList>
    </citation>
    <scope>NUCLEOTIDE SEQUENCE [LARGE SCALE GENOMIC DNA]</scope>
    <source>
        <strain>LT2 / SGSC1412 / ATCC 700720</strain>
    </source>
</reference>
<keyword id="KW-0963">Cytoplasm</keyword>
<keyword id="KW-1185">Reference proteome</keyword>
<comment type="function">
    <text evidence="1">Required for morphogenesis under gluconeogenic growth conditions.</text>
</comment>
<comment type="subcellular location">
    <subcellularLocation>
        <location evidence="1">Cytoplasm</location>
    </subcellularLocation>
</comment>
<comment type="similarity">
    <text evidence="1">Belongs to the gluconeogenesis factor family.</text>
</comment>
<accession>P58586</accession>
<organism>
    <name type="scientific">Salmonella typhimurium (strain LT2 / SGSC1412 / ATCC 700720)</name>
    <dbReference type="NCBI Taxonomy" id="99287"/>
    <lineage>
        <taxon>Bacteria</taxon>
        <taxon>Pseudomonadati</taxon>
        <taxon>Pseudomonadota</taxon>
        <taxon>Gammaproteobacteria</taxon>
        <taxon>Enterobacterales</taxon>
        <taxon>Enterobacteriaceae</taxon>
        <taxon>Salmonella</taxon>
    </lineage>
</organism>
<feature type="chain" id="PRO_0000107800" description="Putative gluconeogenesis factor">
    <location>
        <begin position="1"/>
        <end position="302"/>
    </location>
</feature>
<protein>
    <recommendedName>
        <fullName evidence="1">Putative gluconeogenesis factor</fullName>
    </recommendedName>
</protein>
<sequence>MRNRTLADLDRVVALGGGHGLGRVLSSLSSLGSRLTGIVTTTDNGGSTGRIRRSEGGIAWGDMRNCLNQLITEPSVASAMFEYRFGGNGELSGHNLGNLMLKALDHLSVRPLEAINLIRNLLKVDAQLIPMSELPVDLMAIDDQGHEIYGEVNIDQLATPPQEIMLTPNVPATREAVQAINDADLILIGPGSFYTSLMPCLLLDELAQALRRTPAPMVYIGNLGRELSLPAASLTLVDKLAMMEQYIGKKVIDAVVVGPRVDVSAVNDRLVIQEVLEASDIPYRHDRQLLHNALEKALQALG</sequence>
<dbReference type="EMBL" id="AE006468">
    <property type="protein sequence ID" value="AAL19738.1"/>
    <property type="molecule type" value="Genomic_DNA"/>
</dbReference>
<dbReference type="RefSeq" id="NP_459779.1">
    <property type="nucleotide sequence ID" value="NC_003197.2"/>
</dbReference>
<dbReference type="SMR" id="P58586"/>
<dbReference type="STRING" id="99287.STM0801"/>
<dbReference type="PaxDb" id="99287-STM0801"/>
<dbReference type="GeneID" id="1252321"/>
<dbReference type="KEGG" id="stm:STM0801"/>
<dbReference type="PATRIC" id="fig|99287.12.peg.835"/>
<dbReference type="HOGENOM" id="CLU_044041_2_0_6"/>
<dbReference type="OMA" id="LCGDDDW"/>
<dbReference type="PhylomeDB" id="P58586"/>
<dbReference type="BioCyc" id="SENT99287:STM0801-MONOMER"/>
<dbReference type="Proteomes" id="UP000001014">
    <property type="component" value="Chromosome"/>
</dbReference>
<dbReference type="GO" id="GO:0005737">
    <property type="term" value="C:cytoplasm"/>
    <property type="evidence" value="ECO:0007669"/>
    <property type="project" value="UniProtKB-SubCell"/>
</dbReference>
<dbReference type="GO" id="GO:0043743">
    <property type="term" value="F:LPPG:FO 2-phospho-L-lactate transferase activity"/>
    <property type="evidence" value="ECO:0007669"/>
    <property type="project" value="InterPro"/>
</dbReference>
<dbReference type="GO" id="GO:0008360">
    <property type="term" value="P:regulation of cell shape"/>
    <property type="evidence" value="ECO:0007669"/>
    <property type="project" value="UniProtKB-UniRule"/>
</dbReference>
<dbReference type="CDD" id="cd07187">
    <property type="entry name" value="YvcK_like"/>
    <property type="match status" value="1"/>
</dbReference>
<dbReference type="Gene3D" id="3.40.50.10680">
    <property type="entry name" value="CofD-like domains"/>
    <property type="match status" value="1"/>
</dbReference>
<dbReference type="HAMAP" id="MF_00973">
    <property type="entry name" value="Gluconeogen_factor"/>
    <property type="match status" value="1"/>
</dbReference>
<dbReference type="InterPro" id="IPR002882">
    <property type="entry name" value="CofD"/>
</dbReference>
<dbReference type="InterPro" id="IPR038136">
    <property type="entry name" value="CofD-like_dom_sf"/>
</dbReference>
<dbReference type="InterPro" id="IPR010119">
    <property type="entry name" value="Gluconeogen_factor"/>
</dbReference>
<dbReference type="NCBIfam" id="TIGR01826">
    <property type="entry name" value="CofD_related"/>
    <property type="match status" value="1"/>
</dbReference>
<dbReference type="PANTHER" id="PTHR30135:SF3">
    <property type="entry name" value="GLUCONEOGENESIS FACTOR-RELATED"/>
    <property type="match status" value="1"/>
</dbReference>
<dbReference type="PANTHER" id="PTHR30135">
    <property type="entry name" value="UNCHARACTERIZED PROTEIN YVCK-RELATED"/>
    <property type="match status" value="1"/>
</dbReference>
<dbReference type="Pfam" id="PF01933">
    <property type="entry name" value="CofD"/>
    <property type="match status" value="1"/>
</dbReference>
<dbReference type="SUPFAM" id="SSF142338">
    <property type="entry name" value="CofD-like"/>
    <property type="match status" value="1"/>
</dbReference>
<evidence type="ECO:0000255" key="1">
    <source>
        <dbReference type="HAMAP-Rule" id="MF_00973"/>
    </source>
</evidence>
<proteinExistence type="inferred from homology"/>
<gene>
    <name type="primary">ybhK</name>
    <name type="ordered locus">STM0801</name>
</gene>
<name>GNGF_SALTY</name>